<gene>
    <name evidence="1" type="primary">fpoH</name>
    <name type="ordered locus">MA_1499</name>
</gene>
<feature type="chain" id="PRO_0000240121" description="F(420)H(2) dehydrogenase subunit H">
    <location>
        <begin position="1"/>
        <end position="348"/>
    </location>
</feature>
<feature type="transmembrane region" description="Helical" evidence="1">
    <location>
        <begin position="20"/>
        <end position="40"/>
    </location>
</feature>
<feature type="transmembrane region" description="Helical" evidence="1">
    <location>
        <begin position="93"/>
        <end position="113"/>
    </location>
</feature>
<feature type="transmembrane region" description="Helical" evidence="1">
    <location>
        <begin position="127"/>
        <end position="147"/>
    </location>
</feature>
<feature type="transmembrane region" description="Helical" evidence="1">
    <location>
        <begin position="172"/>
        <end position="192"/>
    </location>
</feature>
<feature type="transmembrane region" description="Helical" evidence="1">
    <location>
        <begin position="198"/>
        <end position="218"/>
    </location>
</feature>
<feature type="transmembrane region" description="Helical" evidence="1">
    <location>
        <begin position="259"/>
        <end position="279"/>
    </location>
</feature>
<feature type="transmembrane region" description="Helical" evidence="1">
    <location>
        <begin position="286"/>
        <end position="306"/>
    </location>
</feature>
<feature type="transmembrane region" description="Helical" evidence="1">
    <location>
        <begin position="328"/>
        <end position="348"/>
    </location>
</feature>
<comment type="function">
    <text evidence="1">Component of the F(420)H(2) dehydrogenase (FPO complex) which is part of the energy-conserving F(420)H(2):heterodisulfide oxidoreductase system. The membrane-bound electron transfer system of the complex plays an important role in the metabolism of methylotrophic methanogens when the organisms grow on methanol or methylamines. Catalyzes the oxidation of methanophenazine to dihydromethanophenazine. It shuttles electrons from F(420)H(2), via FAD and iron-sulfur (Fe-S) centers, to methanophenazine (an electron carrier in the membrane). It couples the redox reaction to proton translocation (for every two electrons transferred, two hydrogen ions are translocated across the cytoplasmic membrane), and thus conserves the redox energy in a proton gradient.</text>
</comment>
<comment type="catalytic activity">
    <reaction evidence="1">
        <text>methanophenazine + reduced coenzyme F420-(gamma-L-Glu)(n) = dihydromethanophenazine + oxidized coenzyme F420-(gamma-L-Glu)(n) + H(+)</text>
        <dbReference type="Rhea" id="RHEA:54752"/>
        <dbReference type="Rhea" id="RHEA-COMP:12939"/>
        <dbReference type="Rhea" id="RHEA-COMP:14378"/>
        <dbReference type="ChEBI" id="CHEBI:15378"/>
        <dbReference type="ChEBI" id="CHEBI:29118"/>
        <dbReference type="ChEBI" id="CHEBI:50375"/>
        <dbReference type="ChEBI" id="CHEBI:133980"/>
        <dbReference type="ChEBI" id="CHEBI:139511"/>
        <dbReference type="EC" id="1.5.98.3"/>
    </reaction>
</comment>
<comment type="subunit">
    <text evidence="1">The FPO complex is composed of at least 13 different subunits. FpoA, FpoH, FpoJ, FpoK, FpoL, FpoM and FpoN proteins constitute the membrane sector of the complex.</text>
</comment>
<comment type="subcellular location">
    <subcellularLocation>
        <location evidence="1">Cell membrane</location>
        <topology evidence="1">Multi-pass membrane protein</topology>
    </subcellularLocation>
</comment>
<comment type="similarity">
    <text evidence="1">Belongs to the complex I subunit 1 family.</text>
</comment>
<proteinExistence type="inferred from homology"/>
<keyword id="KW-1003">Cell membrane</keyword>
<keyword id="KW-0249">Electron transport</keyword>
<keyword id="KW-0472">Membrane</keyword>
<keyword id="KW-0484">Methanogenesis</keyword>
<keyword id="KW-0485">Methanol utilization</keyword>
<keyword id="KW-0560">Oxidoreductase</keyword>
<keyword id="KW-1185">Reference proteome</keyword>
<keyword id="KW-0812">Transmembrane</keyword>
<keyword id="KW-1133">Transmembrane helix</keyword>
<keyword id="KW-0813">Transport</keyword>
<evidence type="ECO:0000255" key="1">
    <source>
        <dbReference type="HAMAP-Rule" id="MF_01350"/>
    </source>
</evidence>
<dbReference type="EC" id="1.5.98.3" evidence="1"/>
<dbReference type="EMBL" id="AE010299">
    <property type="protein sequence ID" value="AAM04913.1"/>
    <property type="molecule type" value="Genomic_DNA"/>
</dbReference>
<dbReference type="SMR" id="Q8TQP1"/>
<dbReference type="STRING" id="188937.MA_1499"/>
<dbReference type="EnsemblBacteria" id="AAM04913">
    <property type="protein sequence ID" value="AAM04913"/>
    <property type="gene ID" value="MA_1499"/>
</dbReference>
<dbReference type="KEGG" id="mac:MA_1499"/>
<dbReference type="HOGENOM" id="CLU_015134_0_1_2"/>
<dbReference type="InParanoid" id="Q8TQP1"/>
<dbReference type="PhylomeDB" id="Q8TQP1"/>
<dbReference type="Proteomes" id="UP000002487">
    <property type="component" value="Chromosome"/>
</dbReference>
<dbReference type="GO" id="GO:0005886">
    <property type="term" value="C:plasma membrane"/>
    <property type="evidence" value="ECO:0007669"/>
    <property type="project" value="UniProtKB-SubCell"/>
</dbReference>
<dbReference type="GO" id="GO:0051911">
    <property type="term" value="F:Methanosarcina-phenazine hydrogenase activity"/>
    <property type="evidence" value="ECO:0007669"/>
    <property type="project" value="UniProtKB-EC"/>
</dbReference>
<dbReference type="GO" id="GO:0043738">
    <property type="term" value="F:reduced coenzyme F420 dehydrogenase activity"/>
    <property type="evidence" value="ECO:0007669"/>
    <property type="project" value="RHEA"/>
</dbReference>
<dbReference type="GO" id="GO:0009060">
    <property type="term" value="P:aerobic respiration"/>
    <property type="evidence" value="ECO:0000318"/>
    <property type="project" value="GO_Central"/>
</dbReference>
<dbReference type="GO" id="GO:0015948">
    <property type="term" value="P:methanogenesis"/>
    <property type="evidence" value="ECO:0007669"/>
    <property type="project" value="UniProtKB-KW"/>
</dbReference>
<dbReference type="GO" id="GO:0015945">
    <property type="term" value="P:methanol metabolic process"/>
    <property type="evidence" value="ECO:0007669"/>
    <property type="project" value="UniProtKB-KW"/>
</dbReference>
<dbReference type="HAMAP" id="MF_01350">
    <property type="entry name" value="NDH1_NuoH"/>
    <property type="match status" value="1"/>
</dbReference>
<dbReference type="InterPro" id="IPR053455">
    <property type="entry name" value="F420H2_dehydrogenase_H"/>
</dbReference>
<dbReference type="InterPro" id="IPR001694">
    <property type="entry name" value="NADH_UbQ_OxRdtase_su1/FPO"/>
</dbReference>
<dbReference type="InterPro" id="IPR018086">
    <property type="entry name" value="NADH_UbQ_OxRdtase_su1_CS"/>
</dbReference>
<dbReference type="NCBIfam" id="NF040610">
    <property type="entry name" value="F420_dehyd_FpoH"/>
    <property type="match status" value="1"/>
</dbReference>
<dbReference type="NCBIfam" id="NF004741">
    <property type="entry name" value="PRK06076.1-2"/>
    <property type="match status" value="1"/>
</dbReference>
<dbReference type="PANTHER" id="PTHR11432">
    <property type="entry name" value="NADH DEHYDROGENASE SUBUNIT 1"/>
    <property type="match status" value="1"/>
</dbReference>
<dbReference type="PANTHER" id="PTHR11432:SF3">
    <property type="entry name" value="NADH-UBIQUINONE OXIDOREDUCTASE CHAIN 1"/>
    <property type="match status" value="1"/>
</dbReference>
<dbReference type="Pfam" id="PF00146">
    <property type="entry name" value="NADHdh"/>
    <property type="match status" value="1"/>
</dbReference>
<dbReference type="PROSITE" id="PS00667">
    <property type="entry name" value="COMPLEX1_ND1_1"/>
    <property type="match status" value="1"/>
</dbReference>
<accession>Q8TQP1</accession>
<sequence>MNIMIEIPEFIIPLIPWIRGVVGLVLVGAIFLGAMGAVWLERKLSADIQFRYGPSRVGKFGLLQLVADAIKLFTKEDMRPRNADRLLFDNAPIFMMSSVFLMLVAIPVGAVFINGVEYPLAVTEMDISVLYIEAMSAITIFGIFMIAYGSNNKYSLLGAFRNFARMVGYEVPLGITVVSVAIMTGSLNIVEIASAQGLLWNIFLQPIGFIVFFIALMADMGRLPFDQNESEEELVAGWITEYTGMRFGLGFFAEYIHMILGSFLVALLFLGGWNVPAFVANNPVLGLIAPTGFFLLKTVLVLMTIIGMRWAVPRFRIDQVVDLSWKRLLPLSLLNLVWAVGLGLYLGA</sequence>
<organism>
    <name type="scientific">Methanosarcina acetivorans (strain ATCC 35395 / DSM 2834 / JCM 12185 / C2A)</name>
    <dbReference type="NCBI Taxonomy" id="188937"/>
    <lineage>
        <taxon>Archaea</taxon>
        <taxon>Methanobacteriati</taxon>
        <taxon>Methanobacteriota</taxon>
        <taxon>Stenosarchaea group</taxon>
        <taxon>Methanomicrobia</taxon>
        <taxon>Methanosarcinales</taxon>
        <taxon>Methanosarcinaceae</taxon>
        <taxon>Methanosarcina</taxon>
    </lineage>
</organism>
<name>FPOH_METAC</name>
<protein>
    <recommendedName>
        <fullName evidence="1">F(420)H(2) dehydrogenase subunit H</fullName>
        <ecNumber evidence="1">1.5.98.3</ecNumber>
    </recommendedName>
    <alternativeName>
        <fullName evidence="1">F(420)H(2)-dependent phenazine dehydrogenase subunit H</fullName>
    </alternativeName>
    <alternativeName>
        <fullName evidence="1">F(420)H(2)-dependent phenazine oxidoreductase subunit H</fullName>
        <shortName evidence="1">FPO subunit H</shortName>
    </alternativeName>
</protein>
<reference key="1">
    <citation type="journal article" date="2002" name="Genome Res.">
        <title>The genome of Methanosarcina acetivorans reveals extensive metabolic and physiological diversity.</title>
        <authorList>
            <person name="Galagan J.E."/>
            <person name="Nusbaum C."/>
            <person name="Roy A."/>
            <person name="Endrizzi M.G."/>
            <person name="Macdonald P."/>
            <person name="FitzHugh W."/>
            <person name="Calvo S."/>
            <person name="Engels R."/>
            <person name="Smirnov S."/>
            <person name="Atnoor D."/>
            <person name="Brown A."/>
            <person name="Allen N."/>
            <person name="Naylor J."/>
            <person name="Stange-Thomann N."/>
            <person name="DeArellano K."/>
            <person name="Johnson R."/>
            <person name="Linton L."/>
            <person name="McEwan P."/>
            <person name="McKernan K."/>
            <person name="Talamas J."/>
            <person name="Tirrell A."/>
            <person name="Ye W."/>
            <person name="Zimmer A."/>
            <person name="Barber R.D."/>
            <person name="Cann I."/>
            <person name="Graham D.E."/>
            <person name="Grahame D.A."/>
            <person name="Guss A.M."/>
            <person name="Hedderich R."/>
            <person name="Ingram-Smith C."/>
            <person name="Kuettner H.C."/>
            <person name="Krzycki J.A."/>
            <person name="Leigh J.A."/>
            <person name="Li W."/>
            <person name="Liu J."/>
            <person name="Mukhopadhyay B."/>
            <person name="Reeve J.N."/>
            <person name="Smith K."/>
            <person name="Springer T.A."/>
            <person name="Umayam L.A."/>
            <person name="White O."/>
            <person name="White R.H."/>
            <person name="de Macario E.C."/>
            <person name="Ferry J.G."/>
            <person name="Jarrell K.F."/>
            <person name="Jing H."/>
            <person name="Macario A.J.L."/>
            <person name="Paulsen I.T."/>
            <person name="Pritchett M."/>
            <person name="Sowers K.R."/>
            <person name="Swanson R.V."/>
            <person name="Zinder S.H."/>
            <person name="Lander E."/>
            <person name="Metcalf W.W."/>
            <person name="Birren B."/>
        </authorList>
    </citation>
    <scope>NUCLEOTIDE SEQUENCE [LARGE SCALE GENOMIC DNA]</scope>
    <source>
        <strain>ATCC 35395 / DSM 2834 / JCM 12185 / C2A</strain>
    </source>
</reference>